<keyword id="KW-0028">Amino-acid biosynthesis</keyword>
<keyword id="KW-0032">Aminotransferase</keyword>
<keyword id="KW-0368">Histidine biosynthesis</keyword>
<keyword id="KW-0663">Pyridoxal phosphate</keyword>
<keyword id="KW-0808">Transferase</keyword>
<feature type="chain" id="PRO_0000153457" description="Histidinol-phosphate aminotransferase">
    <location>
        <begin position="1"/>
        <end position="351"/>
    </location>
</feature>
<feature type="modified residue" description="N6-(pyridoxal phosphate)lysine" evidence="1">
    <location>
        <position position="221"/>
    </location>
</feature>
<name>HIS8_STAES</name>
<comment type="catalytic activity">
    <reaction evidence="1">
        <text>L-histidinol phosphate + 2-oxoglutarate = 3-(imidazol-4-yl)-2-oxopropyl phosphate + L-glutamate</text>
        <dbReference type="Rhea" id="RHEA:23744"/>
        <dbReference type="ChEBI" id="CHEBI:16810"/>
        <dbReference type="ChEBI" id="CHEBI:29985"/>
        <dbReference type="ChEBI" id="CHEBI:57766"/>
        <dbReference type="ChEBI" id="CHEBI:57980"/>
        <dbReference type="EC" id="2.6.1.9"/>
    </reaction>
</comment>
<comment type="cofactor">
    <cofactor evidence="1">
        <name>pyridoxal 5'-phosphate</name>
        <dbReference type="ChEBI" id="CHEBI:597326"/>
    </cofactor>
</comment>
<comment type="pathway">
    <text evidence="1">Amino-acid biosynthesis; L-histidine biosynthesis; L-histidine from 5-phospho-alpha-D-ribose 1-diphosphate: step 7/9.</text>
</comment>
<comment type="subunit">
    <text evidence="1">Homodimer.</text>
</comment>
<comment type="similarity">
    <text evidence="1">Belongs to the class-II pyridoxal-phosphate-dependent aminotransferase family. Histidinol-phosphate aminotransferase subfamily.</text>
</comment>
<reference key="1">
    <citation type="journal article" date="2003" name="Mol. Microbiol.">
        <title>Genome-based analysis of virulence genes in a non-biofilm-forming Staphylococcus epidermidis strain (ATCC 12228).</title>
        <authorList>
            <person name="Zhang Y.-Q."/>
            <person name="Ren S.-X."/>
            <person name="Li H.-L."/>
            <person name="Wang Y.-X."/>
            <person name="Fu G."/>
            <person name="Yang J."/>
            <person name="Qin Z.-Q."/>
            <person name="Miao Y.-G."/>
            <person name="Wang W.-Y."/>
            <person name="Chen R.-S."/>
            <person name="Shen Y."/>
            <person name="Chen Z."/>
            <person name="Yuan Z.-H."/>
            <person name="Zhao G.-P."/>
            <person name="Qu D."/>
            <person name="Danchin A."/>
            <person name="Wen Y.-M."/>
        </authorList>
    </citation>
    <scope>NUCLEOTIDE SEQUENCE [LARGE SCALE GENOMIC DNA]</scope>
    <source>
        <strain>ATCC 12228 / FDA PCI 1200</strain>
    </source>
</reference>
<evidence type="ECO:0000255" key="1">
    <source>
        <dbReference type="HAMAP-Rule" id="MF_01023"/>
    </source>
</evidence>
<dbReference type="EC" id="2.6.1.9" evidence="1"/>
<dbReference type="EMBL" id="AE015929">
    <property type="protein sequence ID" value="AAO04101.1"/>
    <property type="molecule type" value="Genomic_DNA"/>
</dbReference>
<dbReference type="RefSeq" id="NP_764059.1">
    <property type="nucleotide sequence ID" value="NC_004461.1"/>
</dbReference>
<dbReference type="RefSeq" id="WP_002468883.1">
    <property type="nucleotide sequence ID" value="NZ_WBME01000015.1"/>
</dbReference>
<dbReference type="SMR" id="Q8CTG8"/>
<dbReference type="KEGG" id="sep:SE_0504"/>
<dbReference type="PATRIC" id="fig|176280.10.peg.476"/>
<dbReference type="eggNOG" id="COG0079">
    <property type="taxonomic scope" value="Bacteria"/>
</dbReference>
<dbReference type="HOGENOM" id="CLU_017584_3_3_9"/>
<dbReference type="OrthoDB" id="9813612at2"/>
<dbReference type="UniPathway" id="UPA00031">
    <property type="reaction ID" value="UER00012"/>
</dbReference>
<dbReference type="Proteomes" id="UP000001411">
    <property type="component" value="Chromosome"/>
</dbReference>
<dbReference type="GO" id="GO:0004400">
    <property type="term" value="F:histidinol-phosphate transaminase activity"/>
    <property type="evidence" value="ECO:0007669"/>
    <property type="project" value="UniProtKB-UniRule"/>
</dbReference>
<dbReference type="GO" id="GO:0030170">
    <property type="term" value="F:pyridoxal phosphate binding"/>
    <property type="evidence" value="ECO:0007669"/>
    <property type="project" value="InterPro"/>
</dbReference>
<dbReference type="GO" id="GO:0000105">
    <property type="term" value="P:L-histidine biosynthetic process"/>
    <property type="evidence" value="ECO:0007669"/>
    <property type="project" value="UniProtKB-UniRule"/>
</dbReference>
<dbReference type="CDD" id="cd00609">
    <property type="entry name" value="AAT_like"/>
    <property type="match status" value="1"/>
</dbReference>
<dbReference type="Gene3D" id="3.90.1150.10">
    <property type="entry name" value="Aspartate Aminotransferase, domain 1"/>
    <property type="match status" value="1"/>
</dbReference>
<dbReference type="Gene3D" id="3.40.640.10">
    <property type="entry name" value="Type I PLP-dependent aspartate aminotransferase-like (Major domain)"/>
    <property type="match status" value="1"/>
</dbReference>
<dbReference type="HAMAP" id="MF_01023">
    <property type="entry name" value="HisC_aminotrans_2"/>
    <property type="match status" value="1"/>
</dbReference>
<dbReference type="InterPro" id="IPR001917">
    <property type="entry name" value="Aminotrans_II_pyridoxalP_BS"/>
</dbReference>
<dbReference type="InterPro" id="IPR004839">
    <property type="entry name" value="Aminotransferase_I/II_large"/>
</dbReference>
<dbReference type="InterPro" id="IPR005861">
    <property type="entry name" value="HisP_aminotrans"/>
</dbReference>
<dbReference type="InterPro" id="IPR050106">
    <property type="entry name" value="HistidinolP_aminotransfase"/>
</dbReference>
<dbReference type="InterPro" id="IPR015424">
    <property type="entry name" value="PyrdxlP-dep_Trfase"/>
</dbReference>
<dbReference type="InterPro" id="IPR015421">
    <property type="entry name" value="PyrdxlP-dep_Trfase_major"/>
</dbReference>
<dbReference type="InterPro" id="IPR015422">
    <property type="entry name" value="PyrdxlP-dep_Trfase_small"/>
</dbReference>
<dbReference type="NCBIfam" id="TIGR01141">
    <property type="entry name" value="hisC"/>
    <property type="match status" value="1"/>
</dbReference>
<dbReference type="PANTHER" id="PTHR43643:SF3">
    <property type="entry name" value="HISTIDINOL-PHOSPHATE AMINOTRANSFERASE"/>
    <property type="match status" value="1"/>
</dbReference>
<dbReference type="PANTHER" id="PTHR43643">
    <property type="entry name" value="HISTIDINOL-PHOSPHATE AMINOTRANSFERASE 2"/>
    <property type="match status" value="1"/>
</dbReference>
<dbReference type="Pfam" id="PF00155">
    <property type="entry name" value="Aminotran_1_2"/>
    <property type="match status" value="1"/>
</dbReference>
<dbReference type="SUPFAM" id="SSF53383">
    <property type="entry name" value="PLP-dependent transferases"/>
    <property type="match status" value="1"/>
</dbReference>
<dbReference type="PROSITE" id="PS00599">
    <property type="entry name" value="AA_TRANSFER_CLASS_2"/>
    <property type="match status" value="1"/>
</dbReference>
<organism>
    <name type="scientific">Staphylococcus epidermidis (strain ATCC 12228 / FDA PCI 1200)</name>
    <dbReference type="NCBI Taxonomy" id="176280"/>
    <lineage>
        <taxon>Bacteria</taxon>
        <taxon>Bacillati</taxon>
        <taxon>Bacillota</taxon>
        <taxon>Bacilli</taxon>
        <taxon>Bacillales</taxon>
        <taxon>Staphylococcaceae</taxon>
        <taxon>Staphylococcus</taxon>
    </lineage>
</organism>
<gene>
    <name evidence="1" type="primary">hisC</name>
    <name type="ordered locus">SE_0504</name>
</gene>
<sequence>MKKQLDQLTAYTPGLSPESLKKQYGIRGELHKLASNENVYGPSPKVKTAIQSHLDELYYYPESGSPKLREAISQQLNVDASRILFGAGLDEVILMISRAVLSPGDKIITSESTFGQYYHNAIVESADVIQVPLKDGGFDLDGMLQQIDNKTSLIWLCNPNNPTGTYFSHDELFNFLKRVPSDIPVLIDEAYVEFVTADDFPDTLKLQEDFDNAFLLRTFSKAYGLAGLRVGYVIASEDAIEKWNIIRPPFNVTRISEYAAIAALEDQEYLKEVTQKNSFERDKFYQIPQSQHFLPSQANFVFVKTSRSQALYDALLNVGCITRLFPNGVRITIGLPEQNNKMIEVLKHFEY</sequence>
<protein>
    <recommendedName>
        <fullName evidence="1">Histidinol-phosphate aminotransferase</fullName>
        <ecNumber evidence="1">2.6.1.9</ecNumber>
    </recommendedName>
    <alternativeName>
        <fullName evidence="1">Imidazole acetol-phosphate transaminase</fullName>
    </alternativeName>
</protein>
<proteinExistence type="inferred from homology"/>
<accession>Q8CTG8</accession>